<comment type="catalytic activity">
    <reaction>
        <text>myo-inositol + O2 = D-glucuronate + H2O + H(+)</text>
        <dbReference type="Rhea" id="RHEA:23696"/>
        <dbReference type="ChEBI" id="CHEBI:15377"/>
        <dbReference type="ChEBI" id="CHEBI:15378"/>
        <dbReference type="ChEBI" id="CHEBI:15379"/>
        <dbReference type="ChEBI" id="CHEBI:17268"/>
        <dbReference type="ChEBI" id="CHEBI:58720"/>
        <dbReference type="EC" id="1.13.99.1"/>
    </reaction>
</comment>
<comment type="cofactor">
    <cofactor evidence="1">
        <name>Fe cation</name>
        <dbReference type="ChEBI" id="CHEBI:24875"/>
    </cofactor>
    <text evidence="1">Binds 2 iron ions per subunit.</text>
</comment>
<comment type="pathway">
    <text>Polyol metabolism; myo-inositol degradation into D-glucuronate; D-glucuronate from myo-inositol: step 1/1.</text>
</comment>
<comment type="subcellular location">
    <subcellularLocation>
        <location evidence="1">Cytoplasm</location>
    </subcellularLocation>
</comment>
<comment type="similarity">
    <text evidence="4">Belongs to the myo-inositol oxygenase family.</text>
</comment>
<protein>
    <recommendedName>
        <fullName>Inositol oxygenase</fullName>
        <ecNumber>1.13.99.1</ecNumber>
    </recommendedName>
    <alternativeName>
        <fullName>Myo-inositol oxygenase</fullName>
        <shortName>MI oxygenase</shortName>
    </alternativeName>
</protein>
<reference key="1">
    <citation type="submission" date="2007-07" db="EMBL/GenBank/DDBJ databases">
        <authorList>
            <consortium name="NIH - Mammalian Gene Collection (MGC) project"/>
        </authorList>
    </citation>
    <scope>NUCLEOTIDE SEQUENCE [LARGE SCALE MRNA]</scope>
    <source>
        <strain>Hereford</strain>
        <tissue>Kidney</tissue>
    </source>
</reference>
<gene>
    <name type="primary">MIOX</name>
</gene>
<keyword id="KW-0963">Cytoplasm</keyword>
<keyword id="KW-0408">Iron</keyword>
<keyword id="KW-0479">Metal-binding</keyword>
<keyword id="KW-0560">Oxidoreductase</keyword>
<keyword id="KW-0597">Phosphoprotein</keyword>
<keyword id="KW-1185">Reference proteome</keyword>
<feature type="chain" id="PRO_0000328412" description="Inositol oxygenase">
    <location>
        <begin position="1"/>
        <end position="285"/>
    </location>
</feature>
<feature type="region of interest" description="Disordered" evidence="3">
    <location>
        <begin position="1"/>
        <end position="28"/>
    </location>
</feature>
<feature type="compositionally biased region" description="Basic and acidic residues" evidence="3">
    <location>
        <begin position="15"/>
        <end position="28"/>
    </location>
</feature>
<feature type="binding site" evidence="1">
    <location>
        <position position="29"/>
    </location>
    <ligand>
        <name>substrate</name>
    </ligand>
</feature>
<feature type="binding site" evidence="1">
    <location>
        <begin position="85"/>
        <end position="87"/>
    </location>
    <ligand>
        <name>substrate</name>
    </ligand>
</feature>
<feature type="binding site" evidence="1">
    <location>
        <position position="98"/>
    </location>
    <ligand>
        <name>Fe cation</name>
        <dbReference type="ChEBI" id="CHEBI:24875"/>
        <label>1</label>
    </ligand>
</feature>
<feature type="binding site" evidence="1">
    <location>
        <position position="123"/>
    </location>
    <ligand>
        <name>Fe cation</name>
        <dbReference type="ChEBI" id="CHEBI:24875"/>
        <label>1</label>
    </ligand>
</feature>
<feature type="binding site" evidence="1">
    <location>
        <position position="124"/>
    </location>
    <ligand>
        <name>Fe cation</name>
        <dbReference type="ChEBI" id="CHEBI:24875"/>
        <label>1</label>
    </ligand>
</feature>
<feature type="binding site" evidence="1">
    <location>
        <position position="124"/>
    </location>
    <ligand>
        <name>Fe cation</name>
        <dbReference type="ChEBI" id="CHEBI:24875"/>
        <label>2</label>
    </ligand>
</feature>
<feature type="binding site" evidence="1">
    <location>
        <position position="127"/>
    </location>
    <ligand>
        <name>substrate</name>
    </ligand>
</feature>
<feature type="binding site" evidence="1">
    <location>
        <begin position="141"/>
        <end position="142"/>
    </location>
    <ligand>
        <name>substrate</name>
    </ligand>
</feature>
<feature type="binding site" evidence="1">
    <location>
        <position position="194"/>
    </location>
    <ligand>
        <name>Fe cation</name>
        <dbReference type="ChEBI" id="CHEBI:24875"/>
        <label>2</label>
    </ligand>
</feature>
<feature type="binding site" evidence="1">
    <location>
        <begin position="220"/>
        <end position="221"/>
    </location>
    <ligand>
        <name>substrate</name>
    </ligand>
</feature>
<feature type="binding site" evidence="1">
    <location>
        <position position="220"/>
    </location>
    <ligand>
        <name>Fe cation</name>
        <dbReference type="ChEBI" id="CHEBI:24875"/>
        <label>2</label>
    </ligand>
</feature>
<feature type="binding site" evidence="1">
    <location>
        <position position="253"/>
    </location>
    <ligand>
        <name>Fe cation</name>
        <dbReference type="ChEBI" id="CHEBI:24875"/>
        <label>1</label>
    </ligand>
</feature>
<feature type="modified residue" description="Phosphoserine" evidence="2">
    <location>
        <position position="33"/>
    </location>
</feature>
<name>MIOX_BOVIN</name>
<proteinExistence type="evidence at transcript level"/>
<organism>
    <name type="scientific">Bos taurus</name>
    <name type="common">Bovine</name>
    <dbReference type="NCBI Taxonomy" id="9913"/>
    <lineage>
        <taxon>Eukaryota</taxon>
        <taxon>Metazoa</taxon>
        <taxon>Chordata</taxon>
        <taxon>Craniata</taxon>
        <taxon>Vertebrata</taxon>
        <taxon>Euteleostomi</taxon>
        <taxon>Mammalia</taxon>
        <taxon>Eutheria</taxon>
        <taxon>Laurasiatheria</taxon>
        <taxon>Artiodactyla</taxon>
        <taxon>Ruminantia</taxon>
        <taxon>Pecora</taxon>
        <taxon>Bovidae</taxon>
        <taxon>Bovinae</taxon>
        <taxon>Bos</taxon>
    </lineage>
</organism>
<sequence length="285" mass="32973">MKVAADPDPSLVSQRDMEPEAAKDKDSFRNYTSGPLLDRVFATYKLMHTWQTVDFVRRKHAQFGGFSYKRMTVMEAVDMLDGLVDESDPDVDFPNSFHAFQTAEGIRKAHPDKDWFHLVGLLHDLGKVLALAGEPQWAVVGDTFPVGCRPQASVVFRDCTFQDNPDLQDPLYSTELGMYQPHCGLENVLMSWGHDEYMYRMMKFNKFALPPEAFYIIRFHSFYPWHKFGDYQQLCNEQDLAMLPWVQEFNKFDLYTKSSSLPDVAALRPYYQGLVDKYCPGILCW</sequence>
<dbReference type="EC" id="1.13.99.1"/>
<dbReference type="EMBL" id="BC151511">
    <property type="protein sequence ID" value="AAI51512.1"/>
    <property type="molecule type" value="mRNA"/>
</dbReference>
<dbReference type="RefSeq" id="NP_001094535.1">
    <property type="nucleotide sequence ID" value="NM_001101065.1"/>
</dbReference>
<dbReference type="RefSeq" id="XP_010804139.1">
    <property type="nucleotide sequence ID" value="XM_010805837.1"/>
</dbReference>
<dbReference type="SMR" id="A7MBE4"/>
<dbReference type="FunCoup" id="A7MBE4">
    <property type="interactions" value="123"/>
</dbReference>
<dbReference type="STRING" id="9913.ENSBTAP00000071549"/>
<dbReference type="PaxDb" id="9913-ENSBTAP00000003315"/>
<dbReference type="GeneID" id="508591"/>
<dbReference type="KEGG" id="bta:508591"/>
<dbReference type="CTD" id="55586"/>
<dbReference type="VEuPathDB" id="HostDB:ENSBTAG00000002559"/>
<dbReference type="eggNOG" id="KOG1573">
    <property type="taxonomic scope" value="Eukaryota"/>
</dbReference>
<dbReference type="HOGENOM" id="CLU_050259_1_1_1"/>
<dbReference type="InParanoid" id="A7MBE4"/>
<dbReference type="OMA" id="RYNTKYG"/>
<dbReference type="OrthoDB" id="5151075at2759"/>
<dbReference type="Reactome" id="R-BTA-1855183">
    <property type="pathway name" value="Synthesis of IP2, IP, and Ins in the cytosol"/>
</dbReference>
<dbReference type="UniPathway" id="UPA00111">
    <property type="reaction ID" value="UER00527"/>
</dbReference>
<dbReference type="Proteomes" id="UP000009136">
    <property type="component" value="Chromosome 5"/>
</dbReference>
<dbReference type="Bgee" id="ENSBTAG00000002559">
    <property type="expression patterns" value="Expressed in cortex of kidney and 57 other cell types or tissues"/>
</dbReference>
<dbReference type="GO" id="GO:0005737">
    <property type="term" value="C:cytoplasm"/>
    <property type="evidence" value="ECO:0007669"/>
    <property type="project" value="UniProtKB-SubCell"/>
</dbReference>
<dbReference type="GO" id="GO:0008199">
    <property type="term" value="F:ferric iron binding"/>
    <property type="evidence" value="ECO:0000250"/>
    <property type="project" value="UniProtKB"/>
</dbReference>
<dbReference type="GO" id="GO:0050113">
    <property type="term" value="F:inositol oxygenase activity"/>
    <property type="evidence" value="ECO:0000250"/>
    <property type="project" value="UniProtKB"/>
</dbReference>
<dbReference type="GO" id="GO:0019310">
    <property type="term" value="P:inositol catabolic process"/>
    <property type="evidence" value="ECO:0000250"/>
    <property type="project" value="UniProtKB"/>
</dbReference>
<dbReference type="InterPro" id="IPR007828">
    <property type="entry name" value="Inositol_oxygenase"/>
</dbReference>
<dbReference type="PANTHER" id="PTHR12588:SF0">
    <property type="entry name" value="INOSITOL OXYGENASE"/>
    <property type="match status" value="1"/>
</dbReference>
<dbReference type="PANTHER" id="PTHR12588">
    <property type="entry name" value="MYOINOSITOL OXYGENASE"/>
    <property type="match status" value="1"/>
</dbReference>
<dbReference type="Pfam" id="PF05153">
    <property type="entry name" value="MIOX"/>
    <property type="match status" value="1"/>
</dbReference>
<dbReference type="SUPFAM" id="SSF109604">
    <property type="entry name" value="HD-domain/PDEase-like"/>
    <property type="match status" value="1"/>
</dbReference>
<accession>A7MBE4</accession>
<evidence type="ECO:0000250" key="1"/>
<evidence type="ECO:0000250" key="2">
    <source>
        <dbReference type="UniProtKB" id="Q9QXN4"/>
    </source>
</evidence>
<evidence type="ECO:0000256" key="3">
    <source>
        <dbReference type="SAM" id="MobiDB-lite"/>
    </source>
</evidence>
<evidence type="ECO:0000305" key="4"/>